<gene>
    <name type="primary">atx-3</name>
    <name type="ORF">F28F8.6</name>
</gene>
<name>ATX3_CAEEL</name>
<proteinExistence type="evidence at protein level"/>
<feature type="chain" id="PRO_0000053835" description="Ataxin-3 homolog">
    <location>
        <begin position="1"/>
        <end position="317"/>
    </location>
</feature>
<feature type="domain" description="Josephin" evidence="2">
    <location>
        <begin position="7"/>
        <end position="178"/>
    </location>
</feature>
<feature type="domain" description="UIM 1" evidence="10">
    <location>
        <begin position="219"/>
        <end position="239"/>
    </location>
</feature>
<feature type="domain" description="UIM 2" evidence="10">
    <location>
        <begin position="247"/>
        <end position="264"/>
    </location>
</feature>
<feature type="region of interest" description="Disordered" evidence="3">
    <location>
        <begin position="254"/>
        <end position="317"/>
    </location>
</feature>
<feature type="region of interest" description="Interaction with cdc-48.1 and cdc-48.2" evidence="7">
    <location>
        <begin position="296"/>
        <end position="299"/>
    </location>
</feature>
<feature type="compositionally biased region" description="Polar residues" evidence="3">
    <location>
        <begin position="276"/>
        <end position="293"/>
    </location>
</feature>
<feature type="compositionally biased region" description="Basic and acidic residues" evidence="3">
    <location>
        <begin position="294"/>
        <end position="317"/>
    </location>
</feature>
<feature type="active site" description="Nucleophile" evidence="2">
    <location>
        <position position="20"/>
    </location>
</feature>
<feature type="active site" description="Proton acceptor" evidence="2">
    <location>
        <position position="117"/>
    </location>
</feature>
<feature type="active site" evidence="2">
    <location>
        <position position="132"/>
    </location>
</feature>
<feature type="mutagenesis site" description="Loss of catalytic activity. In a cdc-48.1 (tm544) mutant background, causes an increase in longevity and resistance to oxidative stress." evidence="4 7">
    <original>C</original>
    <variation>A</variation>
    <location>
        <position position="20"/>
    </location>
</feature>
<feature type="mutagenesis site" description="Loss of catalytic activity." evidence="4">
    <original>S</original>
    <variation>A</variation>
    <location>
        <position position="232"/>
    </location>
</feature>
<feature type="mutagenesis site" description="Loss of catalytic activity." evidence="4">
    <original>S</original>
    <variation>A</variation>
    <location>
        <position position="260"/>
    </location>
</feature>
<feature type="mutagenesis site" description="Loss of interaction with cdc-48.1 and cdc-48.2." evidence="7">
    <original>RRDR</original>
    <variation>HNHH</variation>
    <location>
        <begin position="296"/>
        <end position="299"/>
    </location>
</feature>
<protein>
    <recommendedName>
        <fullName>Ataxin-3 homolog</fullName>
        <ecNumber evidence="4 7">3.4.19.12</ecNumber>
    </recommendedName>
    <alternativeName>
        <fullName>Machado-Joseph disease-like protein</fullName>
    </alternativeName>
</protein>
<reference key="1">
    <citation type="journal article" date="1998" name="Science">
        <title>Genome sequence of the nematode C. elegans: a platform for investigating biology.</title>
        <authorList>
            <consortium name="The C. elegans sequencing consortium"/>
        </authorList>
    </citation>
    <scope>NUCLEOTIDE SEQUENCE [LARGE SCALE GENOMIC DNA]</scope>
    <source>
        <strain>Bristol N2</strain>
    </source>
</reference>
<reference evidence="10" key="2">
    <citation type="journal article" date="2003" name="Proteins">
        <title>Structural modeling of ataxin-3 reveals distant homology to adaptins.</title>
        <authorList>
            <person name="Albrecht M."/>
            <person name="Hoffmann D."/>
            <person name="Evert B.O."/>
            <person name="Schmitt I."/>
            <person name="Wuellner U."/>
            <person name="Lengauer T."/>
        </authorList>
    </citation>
    <scope>3D-STRUCTURE MODELING</scope>
</reference>
<reference key="3">
    <citation type="journal article" date="2007" name="Biochim. Biophys. Acta">
        <title>NEDD8: a new ataxin-3 interactor.</title>
        <authorList>
            <person name="Ferro A."/>
            <person name="Carvalho A.L."/>
            <person name="Teixeira-Castro A."/>
            <person name="Almeida C."/>
            <person name="Tome R.J."/>
            <person name="Cortes L."/>
            <person name="Rodrigues A.J."/>
            <person name="Logarinho E."/>
            <person name="Sequeiros J."/>
            <person name="Macedo-Ribeiro S."/>
            <person name="Maciel P."/>
        </authorList>
    </citation>
    <scope>INTERACTION WITH NED-8</scope>
</reference>
<reference key="4">
    <citation type="journal article" date="2007" name="FASEB J.">
        <title>Functional genomics and biochemical characterization of the C. elegans orthologue of the Machado-Joseph disease protein ataxin-3.</title>
        <authorList>
            <person name="Rodrigues A.J."/>
            <person name="Coppola G."/>
            <person name="Santos C."/>
            <person name="Costa M.C."/>
            <person name="Ailion M."/>
            <person name="Sequeiros J."/>
            <person name="Geschwind D.H."/>
            <person name="Maciel P."/>
        </authorList>
    </citation>
    <scope>FUNCTION</scope>
    <scope>CATALYTIC ACTIVITY</scope>
    <scope>SUBCELLULAR LOCATION</scope>
    <scope>TISSUE SPECIFICITY</scope>
    <scope>DEVELOPMENTAL STAGE</scope>
    <scope>DISRUPTION PHENOTYPE</scope>
    <scope>MUTAGENESIS OF CYS-20; SER-232 AND SER-260</scope>
</reference>
<reference key="5">
    <citation type="journal article" date="2009" name="Biochem. Biophys. Res. Commun.">
        <title>ATX-3, CDC-48 and UBXN-5: a new trimolecular complex in Caenorhabditis elegans.</title>
        <authorList>
            <person name="Rodrigues A.J."/>
            <person name="Neves-Carvalho A."/>
            <person name="Ferro A."/>
            <person name="Rokka A."/>
            <person name="Corthals G."/>
            <person name="Logarinho E."/>
            <person name="Maciel P."/>
        </authorList>
    </citation>
    <scope>FUNCTION</scope>
    <scope>IDENTIFICATION IN A COMPLEX WITH CDC-48.1 AND UBXN-5</scope>
    <scope>INTERACTION WITH UBXN-5; CDC-48.1 AND CDC-48.2</scope>
    <scope>DISRUPTION PHENOTYPE</scope>
</reference>
<reference key="6">
    <citation type="journal article" date="2011" name="Nat. Cell Biol.">
        <title>The Machado-Joseph disease deubiquitylase ATX-3 couples longevity and proteostasis.</title>
        <authorList>
            <person name="Kuhlbrodt K."/>
            <person name="Janiesch P.C."/>
            <person name="Kevei E."/>
            <person name="Segref A."/>
            <person name="Barikbin R."/>
            <person name="Hoppe T."/>
        </authorList>
    </citation>
    <scope>FUNCTION</scope>
    <scope>CATALYTIC ACTIVITY</scope>
    <scope>IDENTIFICATION IN A COMPLEX WITH CDC-48.1 AND UFD-2</scope>
    <scope>INTERACTION WITH CDC-48.1 AND CDC-48.2</scope>
    <scope>DISRUPTION PHENOTYPE</scope>
    <scope>MUTAGENESIS OF CYS-20 AND 296-ARG--ARG-299</scope>
</reference>
<reference key="7">
    <citation type="journal article" date="2011" name="PLoS ONE">
        <title>Absence of ataxin-3 leads to enhanced stress response in C. elegans.</title>
        <authorList>
            <person name="Rodrigues A.J."/>
            <person name="Neves-Carvalho A."/>
            <person name="Teixeira-Castro A."/>
            <person name="Rokka A."/>
            <person name="Corthals G."/>
            <person name="Logarinho E."/>
            <person name="Maciel P."/>
        </authorList>
    </citation>
    <scope>SUBCELLULAR LOCATION</scope>
    <scope>DISRUPTION PHENOTYPE</scope>
</reference>
<reference key="8">
    <citation type="journal article" date="2016" name="Nat. Struct. Mol. Biol.">
        <title>E4 ligase-specific ubiquitination hubs coordinate DNA double-strand-break repair and apoptosis.</title>
        <authorList>
            <person name="Ackermann L."/>
            <person name="Schell M."/>
            <person name="Pokrzywa W."/>
            <person name="Kevei E."/>
            <person name="Gartner A."/>
            <person name="Schumacher B."/>
            <person name="Hoppe T."/>
        </authorList>
    </citation>
    <scope>FUNCTION</scope>
    <scope>SUBCELLULAR LOCATION</scope>
    <scope>TISSUE SPECIFICITY</scope>
    <scope>DISRUPTION PHENOTYPE</scope>
</reference>
<evidence type="ECO:0000250" key="1">
    <source>
        <dbReference type="UniProtKB" id="P54252"/>
    </source>
</evidence>
<evidence type="ECO:0000255" key="2">
    <source>
        <dbReference type="PROSITE-ProRule" id="PRU00331"/>
    </source>
</evidence>
<evidence type="ECO:0000256" key="3">
    <source>
        <dbReference type="SAM" id="MobiDB-lite"/>
    </source>
</evidence>
<evidence type="ECO:0000269" key="4">
    <source>
    </source>
</evidence>
<evidence type="ECO:0000269" key="5">
    <source>
    </source>
</evidence>
<evidence type="ECO:0000269" key="6">
    <source>
    </source>
</evidence>
<evidence type="ECO:0000269" key="7">
    <source>
    </source>
</evidence>
<evidence type="ECO:0000269" key="8">
    <source>
    </source>
</evidence>
<evidence type="ECO:0000269" key="9">
    <source>
    </source>
</evidence>
<evidence type="ECO:0000305" key="10"/>
<evidence type="ECO:0000312" key="11">
    <source>
        <dbReference type="EMBL" id="CAB03016.1"/>
    </source>
</evidence>
<sequence length="317" mass="35864">MSKDDPINSIFFEHQEAALCAQHALNMLLQDALYKWQDLRDLAIQMDKMEQQILGNANPTPGRSENMNESGYFSIQVLEKALETFSLKLTNIENPAMVDYKNNPLTARAYICNLREHWFVLRKFGNQWFELNSVNRGPKLLSDTYVSMFLHQVSSEGYSIFVVQGVLPRSDADDLISLCPVVPPKVTPKKEQKLEKVMTKFFNTVGKRLGGGSGAPPDSQEEKDLAIAFAMSMETKDGSEVSRSSAEIDEENLRKAIELSQAPGPSEPAEIPLLTRSRSSTPPGASEPFSNAEQQRRDRQKFLERFEKKKEERNDEK</sequence>
<comment type="function">
    <text evidence="1 4 6 7 9">Acts as a chain editing deubiquitinating enzyme that binds and cleaves 'Lys-48'-linked polyubiquitin chains, with a preference for chains containing four or more ubiquitin molecules thereby modulating protein degradation by the ubiquitin-proteasome pathway (PubMed:17234717, PubMed:19545544, PubMed:21317884). Probably by regulating the IGF-1-insulin-like pathway, regulates lifespan (PubMed:21317884). Regulates germline DNA double-strand-break repair and apoptosis in response to DNA damage by recruiting E4 ubiquitin-protein ligase ufd-2 to DNA repair foci (PubMed:27669035). Interacts with key regulators of transcription and represses transcription (By similarity). Acts as a histone-binding protein that regulates transcription (By similarity).</text>
</comment>
<comment type="catalytic activity">
    <reaction evidence="4 7">
        <text>Thiol-dependent hydrolysis of ester, thioester, amide, peptide and isopeptide bonds formed by the C-terminal Gly of ubiquitin (a 76-residue protein attached to proteins as an intracellular targeting signal).</text>
        <dbReference type="EC" id="3.4.19.12"/>
    </reaction>
</comment>
<comment type="subunit">
    <text evidence="5 6 7">Forms a complex composed of deubiquitinating enzyme atx-3, adapter ubxn-5 and cdc-48.1 (PubMed:19545544). Forms a complex composed of deubiquitinating enzyme atx-3, E4 ubiquitin-protein ligase ufd-2 and cdc-48.1 (PubMed:21317884). Interacts (via RRDR motif) with cdc-48.1 (via N-terminus) and cdc-48.2 (via N-terminus); the interaction with cdc-48.1 is not required for atx-3 enzymatic activity (PubMed:19545544, PubMed:21317884). Interacts (via C-terminus) with ubxn-5 (PubMed:19545544). May interact with ned-8 (PubMed:17935801).</text>
</comment>
<comment type="interaction">
    <interactant intactId="EBI-320650">
        <id>O17850</id>
    </interactant>
    <interactant intactId="EBI-320265">
        <id>P54812</id>
        <label>cdc-48.2</label>
    </interactant>
    <organismsDiffer>false</organismsDiffer>
    <experiments>3</experiments>
</comment>
<comment type="subcellular location">
    <subcellularLocation>
        <location evidence="4 8">Cytoplasm</location>
    </subcellularLocation>
    <subcellularLocation>
        <location evidence="4 8">Nucleus</location>
    </subcellularLocation>
    <subcellularLocation>
        <location evidence="9">Nucleus</location>
        <location evidence="9">Nucleolus</location>
    </subcellularLocation>
    <text evidence="4 9">Localizes predominantly in the cytoplasm (PubMed:17234717). In the germline, following ionizing radiation-induced DNA damage, localizes to foci within nucleoli where it colocalizes with cdc-48.1 and/or cdc-48.2 and ufd-2, proteasome alpha subunit and ubiquitinated proteins (PubMed:27669035).</text>
</comment>
<comment type="tissue specificity">
    <text evidence="4 9">Expressed in germline (at protein level) (PubMed:27669035). Expressed in spermatheca, pharynx, dorsal and ventral cords, some head neurons, hypodermis, body wall muscles and coelomocytes (PubMed:17234717).</text>
</comment>
<comment type="developmental stage">
    <text evidence="4">Expression begins during late embryogenesis and continues in larvae and adults.</text>
</comment>
<comment type="disruption phenotype">
    <text evidence="4 6 7 8 9">No visible phenotype (PubMed:17234717). In response to ionizing radiation-mediated DNA damage, the number of germline apoptotic corpses is increased, ufd-2 recruitment to nucleoli foci is impaired, the number of ubiquitin foci is increased and rad-51 retention to DNA damage foci is reduced; the increased germline apoptosis is suppressed in a ufd-2 (tm1380) mutant background (PubMed:27669035). At the higher temperature of 25 degrees Celsius, 60 percent of animals are uncoordinated (PubMed:19545544). Shows resistance to heat stress characterized by an increase in survival and expression of heat shock proteins such as hsp-16.2 and hsp-4 (PubMed:21526185). Expression of genes involved in the ubiquitin-proteasome pathway, motility, cell structure and signal transduction is affected (PubMed:17234717). In a cdc-48.1 (tm544) mutant background, causes a 50 percent increase in longevity, a delay in age-related muscle degeneration and resistance to oxidative and heat stresses (PubMed:21317884). In addition, induces dauer formation in 10 percent of animals and increases gene transcription of several genes including sod-3 and hsp-16.2 (PubMed:21317884). The overall levels of polyubiquitinated proteins is not affected (PubMed:21317884). RNAi-mediated knockdown of daf-16 abolishes the increase in lifespan (PubMed:21317884).</text>
</comment>
<organism evidence="11">
    <name type="scientific">Caenorhabditis elegans</name>
    <dbReference type="NCBI Taxonomy" id="6239"/>
    <lineage>
        <taxon>Eukaryota</taxon>
        <taxon>Metazoa</taxon>
        <taxon>Ecdysozoa</taxon>
        <taxon>Nematoda</taxon>
        <taxon>Chromadorea</taxon>
        <taxon>Rhabditida</taxon>
        <taxon>Rhabditina</taxon>
        <taxon>Rhabditomorpha</taxon>
        <taxon>Rhabditoidea</taxon>
        <taxon>Rhabditidae</taxon>
        <taxon>Peloderinae</taxon>
        <taxon>Caenorhabditis</taxon>
    </lineage>
</organism>
<keyword id="KW-0963">Cytoplasm</keyword>
<keyword id="KW-0378">Hydrolase</keyword>
<keyword id="KW-0539">Nucleus</keyword>
<keyword id="KW-0645">Protease</keyword>
<keyword id="KW-1185">Reference proteome</keyword>
<keyword id="KW-0677">Repeat</keyword>
<keyword id="KW-0788">Thiol protease</keyword>
<keyword id="KW-0804">Transcription</keyword>
<keyword id="KW-0805">Transcription regulation</keyword>
<keyword id="KW-0833">Ubl conjugation pathway</keyword>
<dbReference type="EC" id="3.4.19.12" evidence="4 7"/>
<dbReference type="EMBL" id="Z81071">
    <property type="protein sequence ID" value="CAB03016.1"/>
    <property type="molecule type" value="Genomic_DNA"/>
</dbReference>
<dbReference type="PIR" id="T21511">
    <property type="entry name" value="T21511"/>
</dbReference>
<dbReference type="RefSeq" id="NP_001379190.1">
    <property type="nucleotide sequence ID" value="NM_001392673.1"/>
</dbReference>
<dbReference type="RefSeq" id="NP_506873.1">
    <property type="nucleotide sequence ID" value="NM_074472.7"/>
</dbReference>
<dbReference type="SMR" id="O17850"/>
<dbReference type="BioGRID" id="45043">
    <property type="interactions" value="6"/>
</dbReference>
<dbReference type="DIP" id="DIP-27501N"/>
<dbReference type="FunCoup" id="O17850">
    <property type="interactions" value="1853"/>
</dbReference>
<dbReference type="IntAct" id="O17850">
    <property type="interactions" value="3"/>
</dbReference>
<dbReference type="STRING" id="6239.F28F8.6.1"/>
<dbReference type="MEROPS" id="C86.003"/>
<dbReference type="iPTMnet" id="O17850"/>
<dbReference type="PaxDb" id="6239-F28F8.6.1"/>
<dbReference type="PeptideAtlas" id="O17850"/>
<dbReference type="EnsemblMetazoa" id="F28F8.6.1">
    <property type="protein sequence ID" value="F28F8.6.1"/>
    <property type="gene ID" value="WBGene00006446"/>
</dbReference>
<dbReference type="EnsemblMetazoa" id="F28F8.6.2">
    <property type="protein sequence ID" value="F28F8.6.2"/>
    <property type="gene ID" value="WBGene00006446"/>
</dbReference>
<dbReference type="EnsemblMetazoa" id="F28F8.6.3">
    <property type="protein sequence ID" value="F28F8.6.3"/>
    <property type="gene ID" value="WBGene00006446"/>
</dbReference>
<dbReference type="GeneID" id="180049"/>
<dbReference type="UCSC" id="F28F8.6.1">
    <property type="organism name" value="c. elegans"/>
</dbReference>
<dbReference type="AGR" id="WB:WBGene00006446"/>
<dbReference type="WormBase" id="F28F8.6">
    <property type="protein sequence ID" value="CE09760"/>
    <property type="gene ID" value="WBGene00006446"/>
    <property type="gene designation" value="atx-3"/>
</dbReference>
<dbReference type="eggNOG" id="KOG2935">
    <property type="taxonomic scope" value="Eukaryota"/>
</dbReference>
<dbReference type="GeneTree" id="ENSGT00390000001830"/>
<dbReference type="HOGENOM" id="CLU_031228_1_1_1"/>
<dbReference type="InParanoid" id="O17850"/>
<dbReference type="OMA" id="TARAYIC"/>
<dbReference type="OrthoDB" id="10063692at2759"/>
<dbReference type="PhylomeDB" id="O17850"/>
<dbReference type="Reactome" id="R-CEL-5689877">
    <property type="pathway name" value="Josephin domain DUBs"/>
</dbReference>
<dbReference type="Reactome" id="R-CEL-9615017">
    <property type="pathway name" value="FOXO-mediated transcription of oxidative stress, metabolic and neuronal genes"/>
</dbReference>
<dbReference type="PRO" id="PR:O17850"/>
<dbReference type="Proteomes" id="UP000001940">
    <property type="component" value="Chromosome V"/>
</dbReference>
<dbReference type="Bgee" id="WBGene00006446">
    <property type="expression patterns" value="Expressed in germ line (C elegans) and 4 other cell types or tissues"/>
</dbReference>
<dbReference type="GO" id="GO:0005737">
    <property type="term" value="C:cytoplasm"/>
    <property type="evidence" value="ECO:0000314"/>
    <property type="project" value="WormBase"/>
</dbReference>
<dbReference type="GO" id="GO:0005730">
    <property type="term" value="C:nucleolus"/>
    <property type="evidence" value="ECO:0007669"/>
    <property type="project" value="UniProtKB-SubCell"/>
</dbReference>
<dbReference type="GO" id="GO:0005634">
    <property type="term" value="C:nucleus"/>
    <property type="evidence" value="ECO:0000314"/>
    <property type="project" value="WormBase"/>
</dbReference>
<dbReference type="GO" id="GO:0045202">
    <property type="term" value="C:synapse"/>
    <property type="evidence" value="ECO:0007669"/>
    <property type="project" value="GOC"/>
</dbReference>
<dbReference type="GO" id="GO:0004843">
    <property type="term" value="F:cysteine-type deubiquitinase activity"/>
    <property type="evidence" value="ECO:0000314"/>
    <property type="project" value="WormBase"/>
</dbReference>
<dbReference type="GO" id="GO:0007268">
    <property type="term" value="P:chemical synaptic transmission"/>
    <property type="evidence" value="ECO:0000315"/>
    <property type="project" value="WormBase"/>
</dbReference>
<dbReference type="GO" id="GO:1904262">
    <property type="term" value="P:negative regulation of TORC1 signaling"/>
    <property type="evidence" value="ECO:0000318"/>
    <property type="project" value="GO_Central"/>
</dbReference>
<dbReference type="GO" id="GO:1904294">
    <property type="term" value="P:positive regulation of ERAD pathway"/>
    <property type="evidence" value="ECO:0000318"/>
    <property type="project" value="GO_Central"/>
</dbReference>
<dbReference type="GO" id="GO:0043161">
    <property type="term" value="P:proteasome-mediated ubiquitin-dependent protein catabolic process"/>
    <property type="evidence" value="ECO:0000318"/>
    <property type="project" value="GO_Central"/>
</dbReference>
<dbReference type="GO" id="GO:0016579">
    <property type="term" value="P:protein deubiquitination"/>
    <property type="evidence" value="ECO:0007669"/>
    <property type="project" value="InterPro"/>
</dbReference>
<dbReference type="GO" id="GO:0006515">
    <property type="term" value="P:protein quality control for misfolded or incompletely synthesized proteins"/>
    <property type="evidence" value="ECO:0000318"/>
    <property type="project" value="GO_Central"/>
</dbReference>
<dbReference type="FunFam" id="1.10.287.10:FF:000018">
    <property type="entry name" value="Ataxin-3 homolog"/>
    <property type="match status" value="1"/>
</dbReference>
<dbReference type="Gene3D" id="3.90.70.40">
    <property type="match status" value="1"/>
</dbReference>
<dbReference type="Gene3D" id="1.10.287.10">
    <property type="entry name" value="S15/NS1, RNA-binding"/>
    <property type="match status" value="1"/>
</dbReference>
<dbReference type="InterPro" id="IPR033865">
    <property type="entry name" value="Ataxin-3"/>
</dbReference>
<dbReference type="InterPro" id="IPR006155">
    <property type="entry name" value="Josephin"/>
</dbReference>
<dbReference type="InterPro" id="IPR003903">
    <property type="entry name" value="UIM_dom"/>
</dbReference>
<dbReference type="PANTHER" id="PTHR14159">
    <property type="entry name" value="ATAXIN-3-RELATED"/>
    <property type="match status" value="1"/>
</dbReference>
<dbReference type="PANTHER" id="PTHR14159:SF0">
    <property type="entry name" value="ATAXIN-3-RELATED"/>
    <property type="match status" value="1"/>
</dbReference>
<dbReference type="Pfam" id="PF02099">
    <property type="entry name" value="Josephin"/>
    <property type="match status" value="1"/>
</dbReference>
<dbReference type="Pfam" id="PF02809">
    <property type="entry name" value="UIM"/>
    <property type="match status" value="1"/>
</dbReference>
<dbReference type="Pfam" id="PF23625">
    <property type="entry name" value="UIM_2"/>
    <property type="match status" value="1"/>
</dbReference>
<dbReference type="PRINTS" id="PR01233">
    <property type="entry name" value="JOSEPHIN"/>
</dbReference>
<dbReference type="SMART" id="SM01246">
    <property type="entry name" value="Josephin"/>
    <property type="match status" value="1"/>
</dbReference>
<dbReference type="PROSITE" id="PS50957">
    <property type="entry name" value="JOSEPHIN"/>
    <property type="match status" value="1"/>
</dbReference>
<accession>O17850</accession>